<comment type="function">
    <text evidence="1">Required for maturation of urease via the functional incorporation of the urease nickel metallocenter.</text>
</comment>
<comment type="subunit">
    <text evidence="1">UreD, UreF and UreG form a complex that acts as a GTP-hydrolysis-dependent molecular chaperone, activating the urease apoprotein by helping to assemble the nickel containing metallocenter of UreC. The UreE protein probably delivers the nickel.</text>
</comment>
<comment type="subcellular location">
    <subcellularLocation>
        <location evidence="1">Cytoplasm</location>
    </subcellularLocation>
</comment>
<comment type="similarity">
    <text evidence="1">Belongs to the UreF family.</text>
</comment>
<accession>A6VD01</accession>
<dbReference type="EMBL" id="CP000744">
    <property type="protein sequence ID" value="ABR81167.1"/>
    <property type="molecule type" value="Genomic_DNA"/>
</dbReference>
<dbReference type="RefSeq" id="WP_003157213.1">
    <property type="nucleotide sequence ID" value="NC_009656.1"/>
</dbReference>
<dbReference type="SMR" id="A6VD01"/>
<dbReference type="KEGG" id="pap:PSPA7_5615"/>
<dbReference type="HOGENOM" id="CLU_049215_2_1_6"/>
<dbReference type="Proteomes" id="UP000001582">
    <property type="component" value="Chromosome"/>
</dbReference>
<dbReference type="GO" id="GO:0005737">
    <property type="term" value="C:cytoplasm"/>
    <property type="evidence" value="ECO:0007669"/>
    <property type="project" value="UniProtKB-SubCell"/>
</dbReference>
<dbReference type="GO" id="GO:0016151">
    <property type="term" value="F:nickel cation binding"/>
    <property type="evidence" value="ECO:0007669"/>
    <property type="project" value="UniProtKB-UniRule"/>
</dbReference>
<dbReference type="Gene3D" id="1.10.4190.10">
    <property type="entry name" value="Urease accessory protein UreF"/>
    <property type="match status" value="1"/>
</dbReference>
<dbReference type="HAMAP" id="MF_01385">
    <property type="entry name" value="UreF"/>
    <property type="match status" value="1"/>
</dbReference>
<dbReference type="InterPro" id="IPR002639">
    <property type="entry name" value="UreF"/>
</dbReference>
<dbReference type="InterPro" id="IPR038277">
    <property type="entry name" value="UreF_sf"/>
</dbReference>
<dbReference type="PANTHER" id="PTHR33620">
    <property type="entry name" value="UREASE ACCESSORY PROTEIN F"/>
    <property type="match status" value="1"/>
</dbReference>
<dbReference type="PANTHER" id="PTHR33620:SF1">
    <property type="entry name" value="UREASE ACCESSORY PROTEIN F"/>
    <property type="match status" value="1"/>
</dbReference>
<dbReference type="Pfam" id="PF01730">
    <property type="entry name" value="UreF"/>
    <property type="match status" value="1"/>
</dbReference>
<dbReference type="PIRSF" id="PIRSF009467">
    <property type="entry name" value="Ureas_acces_UreF"/>
    <property type="match status" value="1"/>
</dbReference>
<proteinExistence type="inferred from homology"/>
<gene>
    <name evidence="1" type="primary">ureF</name>
    <name type="ordered locus">PSPA7_5615</name>
</gene>
<protein>
    <recommendedName>
        <fullName evidence="1">Urease accessory protein UreF</fullName>
    </recommendedName>
</protein>
<keyword id="KW-0143">Chaperone</keyword>
<keyword id="KW-0963">Cytoplasm</keyword>
<keyword id="KW-0996">Nickel insertion</keyword>
<sequence>MNSIWARLRLASSQLPIGGYSYSQGLEAALDNGWVRDAESARTWLVDQLQLNLARFEAPLLAGLLRAALAGDWAACDAASERHRASRETRELAQESRQMGFSLQQLLEALPELDDAGRAWLARQDPPNLAAAWAMAARAWRLDAEEALSAWFWNWLENQLAVLMKTLPLGQLAAQKLASSLLPDLDRACAEALRRPAVEGSAAFGLALASMTHETQYSRLFRS</sequence>
<name>UREF_PSEP7</name>
<feature type="chain" id="PRO_0000344147" description="Urease accessory protein UreF">
    <location>
        <begin position="1"/>
        <end position="223"/>
    </location>
</feature>
<evidence type="ECO:0000255" key="1">
    <source>
        <dbReference type="HAMAP-Rule" id="MF_01385"/>
    </source>
</evidence>
<reference key="1">
    <citation type="submission" date="2007-06" db="EMBL/GenBank/DDBJ databases">
        <authorList>
            <person name="Dodson R.J."/>
            <person name="Harkins D."/>
            <person name="Paulsen I.T."/>
        </authorList>
    </citation>
    <scope>NUCLEOTIDE SEQUENCE [LARGE SCALE GENOMIC DNA]</scope>
    <source>
        <strain>DSM 24068 / PA7</strain>
    </source>
</reference>
<organism>
    <name type="scientific">Pseudomonas paraeruginosa (strain DSM 24068 / PA7)</name>
    <name type="common">Pseudomonas aeruginosa (strain PA7)</name>
    <dbReference type="NCBI Taxonomy" id="381754"/>
    <lineage>
        <taxon>Bacteria</taxon>
        <taxon>Pseudomonadati</taxon>
        <taxon>Pseudomonadota</taxon>
        <taxon>Gammaproteobacteria</taxon>
        <taxon>Pseudomonadales</taxon>
        <taxon>Pseudomonadaceae</taxon>
        <taxon>Pseudomonas</taxon>
        <taxon>Pseudomonas paraeruginosa</taxon>
    </lineage>
</organism>